<protein>
    <recommendedName>
        <fullName evidence="1">Large ribosomal subunit protein uL1</fullName>
    </recommendedName>
    <alternativeName>
        <fullName evidence="2">50S ribosomal protein L1</fullName>
    </alternativeName>
</protein>
<accession>B2VG93</accession>
<dbReference type="EMBL" id="CU468135">
    <property type="protein sequence ID" value="CAO95198.1"/>
    <property type="molecule type" value="Genomic_DNA"/>
</dbReference>
<dbReference type="RefSeq" id="WP_012439922.1">
    <property type="nucleotide sequence ID" value="NC_010694.1"/>
</dbReference>
<dbReference type="SMR" id="B2VG93"/>
<dbReference type="STRING" id="465817.ETA_01520"/>
<dbReference type="KEGG" id="eta:ETA_01520"/>
<dbReference type="eggNOG" id="COG0081">
    <property type="taxonomic scope" value="Bacteria"/>
</dbReference>
<dbReference type="HOGENOM" id="CLU_062853_0_0_6"/>
<dbReference type="OrthoDB" id="9803740at2"/>
<dbReference type="Proteomes" id="UP000001726">
    <property type="component" value="Chromosome"/>
</dbReference>
<dbReference type="GO" id="GO:0022625">
    <property type="term" value="C:cytosolic large ribosomal subunit"/>
    <property type="evidence" value="ECO:0007669"/>
    <property type="project" value="TreeGrafter"/>
</dbReference>
<dbReference type="GO" id="GO:0019843">
    <property type="term" value="F:rRNA binding"/>
    <property type="evidence" value="ECO:0007669"/>
    <property type="project" value="UniProtKB-UniRule"/>
</dbReference>
<dbReference type="GO" id="GO:0003735">
    <property type="term" value="F:structural constituent of ribosome"/>
    <property type="evidence" value="ECO:0007669"/>
    <property type="project" value="InterPro"/>
</dbReference>
<dbReference type="GO" id="GO:0000049">
    <property type="term" value="F:tRNA binding"/>
    <property type="evidence" value="ECO:0007669"/>
    <property type="project" value="UniProtKB-KW"/>
</dbReference>
<dbReference type="GO" id="GO:0006417">
    <property type="term" value="P:regulation of translation"/>
    <property type="evidence" value="ECO:0007669"/>
    <property type="project" value="UniProtKB-KW"/>
</dbReference>
<dbReference type="GO" id="GO:0006412">
    <property type="term" value="P:translation"/>
    <property type="evidence" value="ECO:0007669"/>
    <property type="project" value="UniProtKB-UniRule"/>
</dbReference>
<dbReference type="CDD" id="cd00403">
    <property type="entry name" value="Ribosomal_L1"/>
    <property type="match status" value="1"/>
</dbReference>
<dbReference type="FunFam" id="3.40.50.790:FF:000001">
    <property type="entry name" value="50S ribosomal protein L1"/>
    <property type="match status" value="1"/>
</dbReference>
<dbReference type="Gene3D" id="3.30.190.20">
    <property type="match status" value="1"/>
</dbReference>
<dbReference type="Gene3D" id="3.40.50.790">
    <property type="match status" value="1"/>
</dbReference>
<dbReference type="HAMAP" id="MF_01318_B">
    <property type="entry name" value="Ribosomal_uL1_B"/>
    <property type="match status" value="1"/>
</dbReference>
<dbReference type="InterPro" id="IPR005878">
    <property type="entry name" value="Ribosom_uL1_bac-type"/>
</dbReference>
<dbReference type="InterPro" id="IPR002143">
    <property type="entry name" value="Ribosomal_uL1"/>
</dbReference>
<dbReference type="InterPro" id="IPR023674">
    <property type="entry name" value="Ribosomal_uL1-like"/>
</dbReference>
<dbReference type="InterPro" id="IPR028364">
    <property type="entry name" value="Ribosomal_uL1/biogenesis"/>
</dbReference>
<dbReference type="InterPro" id="IPR016095">
    <property type="entry name" value="Ribosomal_uL1_3-a/b-sand"/>
</dbReference>
<dbReference type="InterPro" id="IPR023673">
    <property type="entry name" value="Ribosomal_uL1_CS"/>
</dbReference>
<dbReference type="NCBIfam" id="TIGR01169">
    <property type="entry name" value="rplA_bact"/>
    <property type="match status" value="1"/>
</dbReference>
<dbReference type="PANTHER" id="PTHR36427">
    <property type="entry name" value="54S RIBOSOMAL PROTEIN L1, MITOCHONDRIAL"/>
    <property type="match status" value="1"/>
</dbReference>
<dbReference type="PANTHER" id="PTHR36427:SF3">
    <property type="entry name" value="LARGE RIBOSOMAL SUBUNIT PROTEIN UL1M"/>
    <property type="match status" value="1"/>
</dbReference>
<dbReference type="Pfam" id="PF00687">
    <property type="entry name" value="Ribosomal_L1"/>
    <property type="match status" value="1"/>
</dbReference>
<dbReference type="PIRSF" id="PIRSF002155">
    <property type="entry name" value="Ribosomal_L1"/>
    <property type="match status" value="1"/>
</dbReference>
<dbReference type="SUPFAM" id="SSF56808">
    <property type="entry name" value="Ribosomal protein L1"/>
    <property type="match status" value="1"/>
</dbReference>
<dbReference type="PROSITE" id="PS01199">
    <property type="entry name" value="RIBOSOMAL_L1"/>
    <property type="match status" value="1"/>
</dbReference>
<sequence length="234" mass="24660">MAKLTKRMRVIRDKVDSTKQYDINEAVALLKELATAKFVESVDVAVNLGIDARKSDQNVRGATVLPHGTGRSVRVAVFAQGANAEAAKAAGAELVGMEDLADQIKKGEMNFDVVIASPDAMRVVGQLGQVLGPRGLMPNPKVGTVTPNVAEAVKNAKAGQVRYRNDKNGIIHTTIGKVDFDTDKLKENLESLLVALKKAKPSQAKGVFIKKVSLSTTMGAGVAVDQAGLNASAA</sequence>
<gene>
    <name evidence="1" type="primary">rplA</name>
    <name type="ordered locus">ETA_01520</name>
</gene>
<keyword id="KW-1185">Reference proteome</keyword>
<keyword id="KW-0678">Repressor</keyword>
<keyword id="KW-0687">Ribonucleoprotein</keyword>
<keyword id="KW-0689">Ribosomal protein</keyword>
<keyword id="KW-0694">RNA-binding</keyword>
<keyword id="KW-0699">rRNA-binding</keyword>
<keyword id="KW-0810">Translation regulation</keyword>
<keyword id="KW-0820">tRNA-binding</keyword>
<organism>
    <name type="scientific">Erwinia tasmaniensis (strain DSM 17950 / CFBP 7177 / CIP 109463 / NCPPB 4357 / Et1/99)</name>
    <dbReference type="NCBI Taxonomy" id="465817"/>
    <lineage>
        <taxon>Bacteria</taxon>
        <taxon>Pseudomonadati</taxon>
        <taxon>Pseudomonadota</taxon>
        <taxon>Gammaproteobacteria</taxon>
        <taxon>Enterobacterales</taxon>
        <taxon>Erwiniaceae</taxon>
        <taxon>Erwinia</taxon>
    </lineage>
</organism>
<name>RL1_ERWT9</name>
<evidence type="ECO:0000255" key="1">
    <source>
        <dbReference type="HAMAP-Rule" id="MF_01318"/>
    </source>
</evidence>
<evidence type="ECO:0000305" key="2"/>
<feature type="chain" id="PRO_1000141404" description="Large ribosomal subunit protein uL1">
    <location>
        <begin position="1"/>
        <end position="234"/>
    </location>
</feature>
<comment type="function">
    <text evidence="1">Binds directly to 23S rRNA. The L1 stalk is quite mobile in the ribosome, and is involved in E site tRNA release.</text>
</comment>
<comment type="function">
    <text evidence="1">Protein L1 is also a translational repressor protein, it controls the translation of the L11 operon by binding to its mRNA.</text>
</comment>
<comment type="subunit">
    <text evidence="1">Part of the 50S ribosomal subunit.</text>
</comment>
<comment type="similarity">
    <text evidence="1">Belongs to the universal ribosomal protein uL1 family.</text>
</comment>
<proteinExistence type="inferred from homology"/>
<reference key="1">
    <citation type="journal article" date="2008" name="Environ. Microbiol.">
        <title>The genome of Erwinia tasmaniensis strain Et1/99, a non-pathogenic bacterium in the genus Erwinia.</title>
        <authorList>
            <person name="Kube M."/>
            <person name="Migdoll A.M."/>
            <person name="Mueller I."/>
            <person name="Kuhl H."/>
            <person name="Beck A."/>
            <person name="Reinhardt R."/>
            <person name="Geider K."/>
        </authorList>
    </citation>
    <scope>NUCLEOTIDE SEQUENCE [LARGE SCALE GENOMIC DNA]</scope>
    <source>
        <strain>DSM 17950 / CFBP 7177 / CIP 109463 / NCPPB 4357 / Et1/99</strain>
    </source>
</reference>